<sequence>MRMCDRGIQMLITTVGAFAAFSLMTIAVGTDYWLYSRGVCRTKSTSDNETSRKNEEVMTHSGLWRTCCLEGAFRGVCKKIDHFPEDADYEQDTAEYLLRAVRASSVFPILSVTLLFFGGLCVAASEFHRSRHSVILSAGIFFVSAGLSNIIGIIVYISANAGDPGQRDSKKSYSYGWSFYFGAFSFIIAEIVGVVAVHIYIEKHQQLRARSHSELLKKSTFARLPPYRYRFRRRSSSRSTEPRSRDLSPISKGFHTIPSTDISMFTLSRDPSKLTMGTLLNSDRDHAFLQFHNSTPKEFKESLHNNPANRRTTPV</sequence>
<keyword id="KW-0002">3D-structure</keyword>
<keyword id="KW-0106">Calcium</keyword>
<keyword id="KW-0107">Calcium channel</keyword>
<keyword id="KW-0109">Calcium transport</keyword>
<keyword id="KW-0407">Ion channel</keyword>
<keyword id="KW-0406">Ion transport</keyword>
<keyword id="KW-0472">Membrane</keyword>
<keyword id="KW-0597">Phosphoprotein</keyword>
<keyword id="KW-1185">Reference proteome</keyword>
<keyword id="KW-0812">Transmembrane</keyword>
<keyword id="KW-1133">Transmembrane helix</keyword>
<keyword id="KW-0813">Transport</keyword>
<keyword id="KW-0851">Voltage-gated channel</keyword>
<dbReference type="EMBL" id="AF361340">
    <property type="protein sequence ID" value="AAL50035.1"/>
    <property type="molecule type" value="mRNA"/>
</dbReference>
<dbReference type="RefSeq" id="NP_542422.1">
    <property type="nucleotide sequence ID" value="NM_080691.3"/>
</dbReference>
<dbReference type="PDB" id="7TNJ">
    <property type="method" value="EM"/>
    <property type="resolution" value="4.02 A"/>
    <property type="chains" value="A/B/C/D=5-207"/>
</dbReference>
<dbReference type="PDB" id="7TNK">
    <property type="method" value="EM"/>
    <property type="resolution" value="4.50 A"/>
    <property type="chains" value="A/B/C/D=5-207"/>
</dbReference>
<dbReference type="PDB" id="7TNL">
    <property type="method" value="EM"/>
    <property type="resolution" value="3.59 A"/>
    <property type="chains" value="A/B/C/D=5-207"/>
</dbReference>
<dbReference type="PDB" id="7TNM">
    <property type="method" value="EM"/>
    <property type="resolution" value="4.74 A"/>
    <property type="chains" value="A/B/C/D=5-207"/>
</dbReference>
<dbReference type="PDB" id="7TNP">
    <property type="method" value="EM"/>
    <property type="resolution" value="3.96 A"/>
    <property type="chains" value="A/B/C/D=5-207"/>
</dbReference>
<dbReference type="PDB" id="8C1P">
    <property type="method" value="EM"/>
    <property type="resolution" value="2.90 A"/>
    <property type="chains" value="E/F/G/H=2-315"/>
</dbReference>
<dbReference type="PDB" id="8C1Q">
    <property type="method" value="EM"/>
    <property type="resolution" value="2.82 A"/>
    <property type="chains" value="E/F/G/H=2-315"/>
</dbReference>
<dbReference type="PDB" id="8C2H">
    <property type="method" value="EM"/>
    <property type="resolution" value="2.64 A"/>
    <property type="chains" value="E/F/G/H=2-315"/>
</dbReference>
<dbReference type="PDB" id="8C2I">
    <property type="method" value="EM"/>
    <property type="resolution" value="2.70 A"/>
    <property type="chains" value="E/F/G/H=2-315"/>
</dbReference>
<dbReference type="PDB" id="8P3T">
    <property type="method" value="EM"/>
    <property type="resolution" value="3.39 A"/>
    <property type="chains" value="E/F/G/H=2-315"/>
</dbReference>
<dbReference type="PDB" id="8P3U">
    <property type="method" value="EM"/>
    <property type="resolution" value="3.77 A"/>
    <property type="chains" value="E/F/G/H=2-315"/>
</dbReference>
<dbReference type="PDB" id="8P3V">
    <property type="method" value="EM"/>
    <property type="resolution" value="3.53 A"/>
    <property type="chains" value="E/F/G/H=2-315"/>
</dbReference>
<dbReference type="PDB" id="8P3W">
    <property type="method" value="EM"/>
    <property type="resolution" value="3.53 A"/>
    <property type="chains" value="E/F/G/H=2-315"/>
</dbReference>
<dbReference type="PDBsum" id="7TNJ"/>
<dbReference type="PDBsum" id="7TNK"/>
<dbReference type="PDBsum" id="7TNL"/>
<dbReference type="PDBsum" id="7TNM"/>
<dbReference type="PDBsum" id="7TNP"/>
<dbReference type="PDBsum" id="8C1P"/>
<dbReference type="PDBsum" id="8C1Q"/>
<dbReference type="PDBsum" id="8C2H"/>
<dbReference type="PDBsum" id="8C2I"/>
<dbReference type="PDBsum" id="8P3T"/>
<dbReference type="PDBsum" id="8P3U"/>
<dbReference type="PDBsum" id="8P3V"/>
<dbReference type="PDBsum" id="8P3W"/>
<dbReference type="EMDB" id="EMD-16379"/>
<dbReference type="EMDB" id="EMD-16380"/>
<dbReference type="EMDB" id="EMD-16390"/>
<dbReference type="EMDB" id="EMD-16391"/>
<dbReference type="EMDB" id="EMD-17394"/>
<dbReference type="EMDB" id="EMD-17395"/>
<dbReference type="EMDB" id="EMD-17396"/>
<dbReference type="EMDB" id="EMD-17397"/>
<dbReference type="EMDB" id="EMD-26011"/>
<dbReference type="EMDB" id="EMD-26012"/>
<dbReference type="EMDB" id="EMD-26013"/>
<dbReference type="EMDB" id="EMD-26014"/>
<dbReference type="EMDB" id="EMD-26017"/>
<dbReference type="SMR" id="Q8VHX0"/>
<dbReference type="CORUM" id="Q8VHX0"/>
<dbReference type="FunCoup" id="Q8VHX0">
    <property type="interactions" value="393"/>
</dbReference>
<dbReference type="STRING" id="10116.ENSRNOP00000016632"/>
<dbReference type="iPTMnet" id="Q8VHX0"/>
<dbReference type="PhosphoSitePlus" id="Q8VHX0"/>
<dbReference type="PaxDb" id="10116-ENSRNOP00000016632"/>
<dbReference type="Ensembl" id="ENSRNOT00000016632.4">
    <property type="protein sequence ID" value="ENSRNOP00000016632.1"/>
    <property type="gene ID" value="ENSRNOG00000012362.4"/>
</dbReference>
<dbReference type="GeneID" id="140724"/>
<dbReference type="KEGG" id="rno:140724"/>
<dbReference type="UCSC" id="RGD:628803">
    <property type="organism name" value="rat"/>
</dbReference>
<dbReference type="AGR" id="RGD:628803"/>
<dbReference type="CTD" id="10368"/>
<dbReference type="RGD" id="628803">
    <property type="gene designation" value="Cacng3"/>
</dbReference>
<dbReference type="eggNOG" id="ENOG502QVF5">
    <property type="taxonomic scope" value="Eukaryota"/>
</dbReference>
<dbReference type="GeneTree" id="ENSGT01050000244893"/>
<dbReference type="HOGENOM" id="CLU_053704_0_1_1"/>
<dbReference type="InParanoid" id="Q8VHX0"/>
<dbReference type="OMA" id="YEQDTSE"/>
<dbReference type="OrthoDB" id="9990458at2759"/>
<dbReference type="PhylomeDB" id="Q8VHX0"/>
<dbReference type="TreeFam" id="TF327980"/>
<dbReference type="Reactome" id="R-RNO-399719">
    <property type="pathway name" value="Trafficking of AMPA receptors"/>
</dbReference>
<dbReference type="Reactome" id="R-RNO-5682910">
    <property type="pathway name" value="LGI-ADAM interactions"/>
</dbReference>
<dbReference type="PRO" id="PR:Q8VHX0"/>
<dbReference type="Proteomes" id="UP000002494">
    <property type="component" value="Chromosome 1"/>
</dbReference>
<dbReference type="Bgee" id="ENSRNOG00000012362">
    <property type="expression patterns" value="Expressed in frontal cortex and 3 other cell types or tissues"/>
</dbReference>
<dbReference type="GO" id="GO:0032281">
    <property type="term" value="C:AMPA glutamate receptor complex"/>
    <property type="evidence" value="ECO:0000314"/>
    <property type="project" value="UniProtKB"/>
</dbReference>
<dbReference type="GO" id="GO:0030425">
    <property type="term" value="C:dendrite"/>
    <property type="evidence" value="ECO:0000314"/>
    <property type="project" value="RGD"/>
</dbReference>
<dbReference type="GO" id="GO:0060076">
    <property type="term" value="C:excitatory synapse"/>
    <property type="evidence" value="ECO:0000314"/>
    <property type="project" value="RGD"/>
</dbReference>
<dbReference type="GO" id="GO:0098978">
    <property type="term" value="C:glutamatergic synapse"/>
    <property type="evidence" value="ECO:0000314"/>
    <property type="project" value="SynGO"/>
</dbReference>
<dbReference type="GO" id="GO:0098839">
    <property type="term" value="C:postsynaptic density membrane"/>
    <property type="evidence" value="ECO:0000314"/>
    <property type="project" value="RGD"/>
</dbReference>
<dbReference type="GO" id="GO:0098685">
    <property type="term" value="C:Schaffer collateral - CA1 synapse"/>
    <property type="evidence" value="ECO:0000266"/>
    <property type="project" value="RGD"/>
</dbReference>
<dbReference type="GO" id="GO:0036477">
    <property type="term" value="C:somatodendritic compartment"/>
    <property type="evidence" value="ECO:0000250"/>
    <property type="project" value="UniProtKB"/>
</dbReference>
<dbReference type="GO" id="GO:0016247">
    <property type="term" value="F:channel regulator activity"/>
    <property type="evidence" value="ECO:0000318"/>
    <property type="project" value="GO_Central"/>
</dbReference>
<dbReference type="GO" id="GO:0035255">
    <property type="term" value="F:ionotropic glutamate receptor binding"/>
    <property type="evidence" value="ECO:0000314"/>
    <property type="project" value="RGD"/>
</dbReference>
<dbReference type="GO" id="GO:0030165">
    <property type="term" value="F:PDZ domain binding"/>
    <property type="evidence" value="ECO:0000314"/>
    <property type="project" value="RGD"/>
</dbReference>
<dbReference type="GO" id="GO:0005245">
    <property type="term" value="F:voltage-gated calcium channel activity"/>
    <property type="evidence" value="ECO:0000318"/>
    <property type="project" value="GO_Central"/>
</dbReference>
<dbReference type="GO" id="GO:0099645">
    <property type="term" value="P:neurotransmitter receptor localization to postsynaptic specialization membrane"/>
    <property type="evidence" value="ECO:0000266"/>
    <property type="project" value="RGD"/>
</dbReference>
<dbReference type="GO" id="GO:0051968">
    <property type="term" value="P:positive regulation of synaptic transmission, glutamatergic"/>
    <property type="evidence" value="ECO:0000318"/>
    <property type="project" value="GO_Central"/>
</dbReference>
<dbReference type="GO" id="GO:0098970">
    <property type="term" value="P:postsynaptic neurotransmitter receptor diffusion trapping"/>
    <property type="evidence" value="ECO:0000318"/>
    <property type="project" value="GO_Central"/>
</dbReference>
<dbReference type="GO" id="GO:0008104">
    <property type="term" value="P:protein localization"/>
    <property type="evidence" value="ECO:0000250"/>
    <property type="project" value="UniProtKB"/>
</dbReference>
<dbReference type="GO" id="GO:0006605">
    <property type="term" value="P:protein targeting"/>
    <property type="evidence" value="ECO:0000250"/>
    <property type="project" value="UniProtKB"/>
</dbReference>
<dbReference type="GO" id="GO:2000311">
    <property type="term" value="P:regulation of AMPA receptor activity"/>
    <property type="evidence" value="ECO:0000314"/>
    <property type="project" value="UniProtKB"/>
</dbReference>
<dbReference type="GO" id="GO:0019226">
    <property type="term" value="P:transmission of nerve impulse"/>
    <property type="evidence" value="ECO:0000318"/>
    <property type="project" value="GO_Central"/>
</dbReference>
<dbReference type="FunFam" id="1.20.140.150:FF:000002">
    <property type="entry name" value="Voltage-dependent calcium channel gamma-2 subunit"/>
    <property type="match status" value="1"/>
</dbReference>
<dbReference type="Gene3D" id="1.20.140.150">
    <property type="match status" value="1"/>
</dbReference>
<dbReference type="InterPro" id="IPR051072">
    <property type="entry name" value="CACNG_subunit"/>
</dbReference>
<dbReference type="InterPro" id="IPR004031">
    <property type="entry name" value="PMP22/EMP/MP20/Claudin"/>
</dbReference>
<dbReference type="InterPro" id="IPR008368">
    <property type="entry name" value="VDCC_gsu"/>
</dbReference>
<dbReference type="PANTHER" id="PTHR12107">
    <property type="entry name" value="VOLTAGE-DEPENDENT CALCIUM CHANNEL GAMMA SUBUNIT"/>
    <property type="match status" value="1"/>
</dbReference>
<dbReference type="PANTHER" id="PTHR12107:SF5">
    <property type="entry name" value="VOLTAGE-DEPENDENT CALCIUM CHANNEL GAMMA-3 SUBUNIT"/>
    <property type="match status" value="1"/>
</dbReference>
<dbReference type="Pfam" id="PF00822">
    <property type="entry name" value="PMP22_Claudin"/>
    <property type="match status" value="1"/>
</dbReference>
<dbReference type="PRINTS" id="PR01792">
    <property type="entry name" value="VDCCGAMMA"/>
</dbReference>
<reference key="1">
    <citation type="journal article" date="2001" name="Gene">
        <title>Calcium channel gamma subunits provide insights into the evolution of this gene family.</title>
        <authorList>
            <person name="Chu P.-J."/>
            <person name="Robertson H.M."/>
            <person name="Best P.M."/>
        </authorList>
    </citation>
    <scope>NUCLEOTIDE SEQUENCE [MRNA]</scope>
    <source>
        <strain>Sprague-Dawley</strain>
    </source>
</reference>
<reference key="2">
    <citation type="journal article" date="2007" name="Neuron">
        <title>TARP subtypes differentially and dose-dependently control synaptic AMPA receptor gating.</title>
        <authorList>
            <person name="Milstein A.D."/>
            <person name="Zhou W."/>
            <person name="Karimzadegan S."/>
            <person name="Bredt D.S."/>
            <person name="Nicoll R.A."/>
        </authorList>
    </citation>
    <scope>FUNCTION</scope>
</reference>
<reference key="3">
    <citation type="journal article" date="2009" name="Nat. Neurosci.">
        <title>Selective regulation of long-form calcium-permeable AMPA receptors by an atypical TARP, gamma-5.</title>
        <authorList>
            <person name="Soto D."/>
            <person name="Coombs I.D."/>
            <person name="Renzi M."/>
            <person name="Zonouzi M."/>
            <person name="Farrant M."/>
            <person name="Cull-Candy S.G."/>
        </authorList>
    </citation>
    <scope>FUNCTION</scope>
</reference>
<reference key="4">
    <citation type="journal article" date="2009" name="Nat. Neurosci.">
        <authorList>
            <person name="Soto D."/>
            <person name="Coombs I.D."/>
            <person name="Renzi M."/>
            <person name="Zonouzi M."/>
            <person name="Farrant M."/>
            <person name="Cull-Candy S.G."/>
        </authorList>
    </citation>
    <scope>ERRATUM OF PUBMED:19234459</scope>
</reference>
<reference key="5">
    <citation type="journal article" date="2009" name="Science">
        <title>Functional proteomics identify cornichon proteins as auxiliary subunits of AMPA receptors.</title>
        <authorList>
            <person name="Schwenk J."/>
            <person name="Harmel N."/>
            <person name="Zolles G."/>
            <person name="Bildl W."/>
            <person name="Kulik A."/>
            <person name="Heimrich B."/>
            <person name="Chisaka O."/>
            <person name="Jonas P."/>
            <person name="Schulte U."/>
            <person name="Fakler B."/>
            <person name="Kloecker N."/>
        </authorList>
    </citation>
    <scope>SUBUNIT</scope>
    <scope>IDENTIFICATION BY MASS SPECTROMETRY</scope>
</reference>
<reference key="6">
    <citation type="journal article" date="2012" name="Nat. Commun.">
        <title>Quantitative maps of protein phosphorylation sites across 14 different rat organs and tissues.</title>
        <authorList>
            <person name="Lundby A."/>
            <person name="Secher A."/>
            <person name="Lage K."/>
            <person name="Nordsborg N.B."/>
            <person name="Dmytriyev A."/>
            <person name="Lundby C."/>
            <person name="Olsen J.V."/>
        </authorList>
    </citation>
    <scope>PHOSPHORYLATION [LARGE SCALE ANALYSIS] AT SER-248</scope>
    <scope>IDENTIFICATION BY MASS SPECTROMETRY [LARGE SCALE ANALYSIS]</scope>
</reference>
<protein>
    <recommendedName>
        <fullName>Voltage-dependent calcium channel gamma-3 subunit</fullName>
    </recommendedName>
    <alternativeName>
        <fullName>Neuronal voltage-gated calcium channel gamma-3 subunit</fullName>
    </alternativeName>
    <alternativeName>
        <fullName>Transmembrane AMPAR regulatory protein gamma-3</fullName>
        <shortName>TARP gamma-3</shortName>
    </alternativeName>
</protein>
<evidence type="ECO:0000250" key="1">
    <source>
        <dbReference type="UniProtKB" id="Q9JJV5"/>
    </source>
</evidence>
<evidence type="ECO:0000255" key="2"/>
<evidence type="ECO:0000256" key="3">
    <source>
        <dbReference type="SAM" id="MobiDB-lite"/>
    </source>
</evidence>
<evidence type="ECO:0000269" key="4">
    <source>
    </source>
</evidence>
<evidence type="ECO:0000269" key="5">
    <source>
    </source>
</evidence>
<evidence type="ECO:0000269" key="6">
    <source>
    </source>
</evidence>
<evidence type="ECO:0000305" key="7"/>
<evidence type="ECO:0007744" key="8">
    <source>
    </source>
</evidence>
<evidence type="ECO:0007829" key="9">
    <source>
        <dbReference type="PDB" id="8C2H"/>
    </source>
</evidence>
<name>CCG3_RAT</name>
<comment type="function">
    <text evidence="4 5">Regulates the trafficking to the somatodendritic compartment and gating properties of AMPA-selective glutamate receptors (AMPARs). Promotes their targeting to the cell membrane and synapses and modulates their gating properties by slowing their rates of activation, deactivation and desensitization. Does not show subunit-specific AMPA receptor regulation and regulates all AMPAR subunits. Thought to stabilize the calcium channel in an inactivated (closed) state.</text>
</comment>
<comment type="subunit">
    <text evidence="1 6">The L-type calcium channel is composed of five subunits: alpha-1, alpha-2/delta, beta and gamma. Acts as an auxiliary subunit for AMPA-selective glutamate receptors (AMPARs). Found in a complex with GRIA1, GRIA2, GRIA3, GRIA4, CNIH2, CNIH3, CACNG2, CACNG4, CACNG5, CACNG7 and CACNG8 (PubMed:19265014). Interacts with AP4M1 and GRIA1; associates GRIA1 with the adaptor protein complex 4 (AP-4) to target GRIA1 to the somatodendritic compartment of neurons (By similarity).</text>
</comment>
<comment type="subcellular location">
    <subcellularLocation>
        <location evidence="2">Membrane</location>
        <topology evidence="2">Multi-pass membrane protein</topology>
    </subcellularLocation>
    <text evidence="1">Displays a somatodendritic localization and is excluded from axons in neurons.</text>
</comment>
<comment type="similarity">
    <text evidence="7">Belongs to the PMP-22/EMP/MP20 family. CACNG subfamily.</text>
</comment>
<feature type="chain" id="PRO_0000164677" description="Voltage-dependent calcium channel gamma-3 subunit">
    <location>
        <begin position="1"/>
        <end position="315"/>
    </location>
</feature>
<feature type="transmembrane region" description="Helical" evidence="2">
    <location>
        <begin position="8"/>
        <end position="28"/>
    </location>
</feature>
<feature type="transmembrane region" description="Helical" evidence="2">
    <location>
        <begin position="104"/>
        <end position="124"/>
    </location>
</feature>
<feature type="transmembrane region" description="Helical" evidence="2">
    <location>
        <begin position="135"/>
        <end position="155"/>
    </location>
</feature>
<feature type="transmembrane region" description="Helical" evidence="2">
    <location>
        <begin position="181"/>
        <end position="201"/>
    </location>
</feature>
<feature type="region of interest" description="Disordered" evidence="3">
    <location>
        <begin position="232"/>
        <end position="253"/>
    </location>
</feature>
<feature type="modified residue" description="Phosphoserine" evidence="8">
    <location>
        <position position="248"/>
    </location>
</feature>
<feature type="helix" evidence="9">
    <location>
        <begin position="6"/>
        <end position="29"/>
    </location>
</feature>
<feature type="strand" evidence="9">
    <location>
        <begin position="33"/>
        <end position="38"/>
    </location>
</feature>
<feature type="strand" evidence="9">
    <location>
        <begin position="57"/>
        <end position="61"/>
    </location>
</feature>
<feature type="strand" evidence="9">
    <location>
        <begin position="63"/>
        <end position="71"/>
    </location>
</feature>
<feature type="turn" evidence="9">
    <location>
        <begin position="72"/>
        <end position="75"/>
    </location>
</feature>
<feature type="strand" evidence="9">
    <location>
        <begin position="77"/>
        <end position="79"/>
    </location>
</feature>
<feature type="helix" evidence="9">
    <location>
        <begin position="93"/>
        <end position="104"/>
    </location>
</feature>
<feature type="helix" evidence="9">
    <location>
        <begin position="106"/>
        <end position="127"/>
    </location>
</feature>
<feature type="helix" evidence="9">
    <location>
        <begin position="133"/>
        <end position="160"/>
    </location>
</feature>
<feature type="strand" evidence="9">
    <location>
        <begin position="173"/>
        <end position="175"/>
    </location>
</feature>
<feature type="helix" evidence="9">
    <location>
        <begin position="177"/>
        <end position="206"/>
    </location>
</feature>
<gene>
    <name type="primary">Cacng3</name>
</gene>
<accession>Q8VHX0</accession>
<organism>
    <name type="scientific">Rattus norvegicus</name>
    <name type="common">Rat</name>
    <dbReference type="NCBI Taxonomy" id="10116"/>
    <lineage>
        <taxon>Eukaryota</taxon>
        <taxon>Metazoa</taxon>
        <taxon>Chordata</taxon>
        <taxon>Craniata</taxon>
        <taxon>Vertebrata</taxon>
        <taxon>Euteleostomi</taxon>
        <taxon>Mammalia</taxon>
        <taxon>Eutheria</taxon>
        <taxon>Euarchontoglires</taxon>
        <taxon>Glires</taxon>
        <taxon>Rodentia</taxon>
        <taxon>Myomorpha</taxon>
        <taxon>Muroidea</taxon>
        <taxon>Muridae</taxon>
        <taxon>Murinae</taxon>
        <taxon>Rattus</taxon>
    </lineage>
</organism>
<proteinExistence type="evidence at protein level"/>